<organism>
    <name type="scientific">Schizosaccharomyces pombe (strain 972 / ATCC 24843)</name>
    <name type="common">Fission yeast</name>
    <dbReference type="NCBI Taxonomy" id="284812"/>
    <lineage>
        <taxon>Eukaryota</taxon>
        <taxon>Fungi</taxon>
        <taxon>Dikarya</taxon>
        <taxon>Ascomycota</taxon>
        <taxon>Taphrinomycotina</taxon>
        <taxon>Schizosaccharomycetes</taxon>
        <taxon>Schizosaccharomycetales</taxon>
        <taxon>Schizosaccharomycetaceae</taxon>
        <taxon>Schizosaccharomyces</taxon>
    </lineage>
</organism>
<name>YDBI_SCHPO</name>
<reference key="1">
    <citation type="journal article" date="2002" name="Nature">
        <title>The genome sequence of Schizosaccharomyces pombe.</title>
        <authorList>
            <person name="Wood V."/>
            <person name="Gwilliam R."/>
            <person name="Rajandream M.A."/>
            <person name="Lyne M.H."/>
            <person name="Lyne R."/>
            <person name="Stewart A."/>
            <person name="Sgouros J.G."/>
            <person name="Peat N."/>
            <person name="Hayles J."/>
            <person name="Baker S.G."/>
            <person name="Basham D."/>
            <person name="Bowman S."/>
            <person name="Brooks K."/>
            <person name="Brown D."/>
            <person name="Brown S."/>
            <person name="Chillingworth T."/>
            <person name="Churcher C.M."/>
            <person name="Collins M."/>
            <person name="Connor R."/>
            <person name="Cronin A."/>
            <person name="Davis P."/>
            <person name="Feltwell T."/>
            <person name="Fraser A."/>
            <person name="Gentles S."/>
            <person name="Goble A."/>
            <person name="Hamlin N."/>
            <person name="Harris D.E."/>
            <person name="Hidalgo J."/>
            <person name="Hodgson G."/>
            <person name="Holroyd S."/>
            <person name="Hornsby T."/>
            <person name="Howarth S."/>
            <person name="Huckle E.J."/>
            <person name="Hunt S."/>
            <person name="Jagels K."/>
            <person name="James K.D."/>
            <person name="Jones L."/>
            <person name="Jones M."/>
            <person name="Leather S."/>
            <person name="McDonald S."/>
            <person name="McLean J."/>
            <person name="Mooney P."/>
            <person name="Moule S."/>
            <person name="Mungall K.L."/>
            <person name="Murphy L.D."/>
            <person name="Niblett D."/>
            <person name="Odell C."/>
            <person name="Oliver K."/>
            <person name="O'Neil S."/>
            <person name="Pearson D."/>
            <person name="Quail M.A."/>
            <person name="Rabbinowitsch E."/>
            <person name="Rutherford K.M."/>
            <person name="Rutter S."/>
            <person name="Saunders D."/>
            <person name="Seeger K."/>
            <person name="Sharp S."/>
            <person name="Skelton J."/>
            <person name="Simmonds M.N."/>
            <person name="Squares R."/>
            <person name="Squares S."/>
            <person name="Stevens K."/>
            <person name="Taylor K."/>
            <person name="Taylor R.G."/>
            <person name="Tivey A."/>
            <person name="Walsh S.V."/>
            <person name="Warren T."/>
            <person name="Whitehead S."/>
            <person name="Woodward J.R."/>
            <person name="Volckaert G."/>
            <person name="Aert R."/>
            <person name="Robben J."/>
            <person name="Grymonprez B."/>
            <person name="Weltjens I."/>
            <person name="Vanstreels E."/>
            <person name="Rieger M."/>
            <person name="Schaefer M."/>
            <person name="Mueller-Auer S."/>
            <person name="Gabel C."/>
            <person name="Fuchs M."/>
            <person name="Duesterhoeft A."/>
            <person name="Fritzc C."/>
            <person name="Holzer E."/>
            <person name="Moestl D."/>
            <person name="Hilbert H."/>
            <person name="Borzym K."/>
            <person name="Langer I."/>
            <person name="Beck A."/>
            <person name="Lehrach H."/>
            <person name="Reinhardt R."/>
            <person name="Pohl T.M."/>
            <person name="Eger P."/>
            <person name="Zimmermann W."/>
            <person name="Wedler H."/>
            <person name="Wambutt R."/>
            <person name="Purnelle B."/>
            <person name="Goffeau A."/>
            <person name="Cadieu E."/>
            <person name="Dreano S."/>
            <person name="Gloux S."/>
            <person name="Lelaure V."/>
            <person name="Mottier S."/>
            <person name="Galibert F."/>
            <person name="Aves S.J."/>
            <person name="Xiang Z."/>
            <person name="Hunt C."/>
            <person name="Moore K."/>
            <person name="Hurst S.M."/>
            <person name="Lucas M."/>
            <person name="Rochet M."/>
            <person name="Gaillardin C."/>
            <person name="Tallada V.A."/>
            <person name="Garzon A."/>
            <person name="Thode G."/>
            <person name="Daga R.R."/>
            <person name="Cruzado L."/>
            <person name="Jimenez J."/>
            <person name="Sanchez M."/>
            <person name="del Rey F."/>
            <person name="Benito J."/>
            <person name="Dominguez A."/>
            <person name="Revuelta J.L."/>
            <person name="Moreno S."/>
            <person name="Armstrong J."/>
            <person name="Forsburg S.L."/>
            <person name="Cerutti L."/>
            <person name="Lowe T."/>
            <person name="McCombie W.R."/>
            <person name="Paulsen I."/>
            <person name="Potashkin J."/>
            <person name="Shpakovski G.V."/>
            <person name="Ussery D."/>
            <person name="Barrell B.G."/>
            <person name="Nurse P."/>
        </authorList>
    </citation>
    <scope>NUCLEOTIDE SEQUENCE [LARGE SCALE GENOMIC DNA]</scope>
    <source>
        <strain>972 / ATCC 24843</strain>
    </source>
</reference>
<reference key="2">
    <citation type="journal article" date="2008" name="J. Proteome Res.">
        <title>Phosphoproteome analysis of fission yeast.</title>
        <authorList>
            <person name="Wilson-Grady J.T."/>
            <person name="Villen J."/>
            <person name="Gygi S.P."/>
        </authorList>
    </citation>
    <scope>PHOSPHORYLATION [LARGE SCALE ANALYSIS] AT SER-211</scope>
    <scope>IDENTIFICATION BY MASS SPECTROMETRY</scope>
</reference>
<accession>Q10368</accession>
<sequence>MSDTMVKNQAEEDEIVKSLNNVLKIVVTARKCLDDMKPIELPSELVESPLSMLKDVATLIHQYTTKLSVAAKPPITRDALEKYANDMATTITPLIAAVQVFNAEKYGEIIQNRLKMYAERVLFGIEALLRSVSPKPLGYISEDWKTRGRLIDTGILWESCEKIEKLGSEGIVGYMLEEWDNFVSMLEDARSDLEDYKEGDDSNWDDFGSESEDDSKEAHSEEVFRSEEQIQLANSLLQKLNACKILFLSIKKRRIKNEYPNTFLGELFNAAKQTSDSIDDIVAQIQEDDENFENELDNFHRSARNLCKICISSAQEDSFTPWFSKWLENWEIVSQK</sequence>
<protein>
    <recommendedName>
        <fullName>Uncharacterized protein C22E12.18</fullName>
    </recommendedName>
</protein>
<feature type="chain" id="PRO_0000116607" description="Uncharacterized protein C22E12.18">
    <location>
        <begin position="1"/>
        <end position="336"/>
    </location>
</feature>
<feature type="region of interest" description="Disordered" evidence="1">
    <location>
        <begin position="196"/>
        <end position="222"/>
    </location>
</feature>
<feature type="compositionally biased region" description="Acidic residues" evidence="1">
    <location>
        <begin position="201"/>
        <end position="215"/>
    </location>
</feature>
<feature type="modified residue" description="Phosphoserine" evidence="2">
    <location>
        <position position="211"/>
    </location>
</feature>
<gene>
    <name type="ORF">SPAC22E12.18</name>
</gene>
<keyword id="KW-0597">Phosphoprotein</keyword>
<keyword id="KW-1185">Reference proteome</keyword>
<evidence type="ECO:0000256" key="1">
    <source>
        <dbReference type="SAM" id="MobiDB-lite"/>
    </source>
</evidence>
<evidence type="ECO:0000269" key="2">
    <source>
    </source>
</evidence>
<dbReference type="EMBL" id="CU329670">
    <property type="protein sequence ID" value="CAA93905.1"/>
    <property type="molecule type" value="Genomic_DNA"/>
</dbReference>
<dbReference type="PIR" id="T38175">
    <property type="entry name" value="T38175"/>
</dbReference>
<dbReference type="RefSeq" id="NP_594844.1">
    <property type="nucleotide sequence ID" value="NM_001020273.2"/>
</dbReference>
<dbReference type="SMR" id="Q10368"/>
<dbReference type="BioGRID" id="278341">
    <property type="interactions" value="3"/>
</dbReference>
<dbReference type="FunCoup" id="Q10368">
    <property type="interactions" value="405"/>
</dbReference>
<dbReference type="STRING" id="284812.Q10368"/>
<dbReference type="iPTMnet" id="Q10368"/>
<dbReference type="PaxDb" id="4896-SPAC22E12.18.1"/>
<dbReference type="EnsemblFungi" id="SPAC22E12.18.1">
    <property type="protein sequence ID" value="SPAC22E12.18.1:pep"/>
    <property type="gene ID" value="SPAC22E12.18"/>
</dbReference>
<dbReference type="KEGG" id="spo:2541850"/>
<dbReference type="PomBase" id="SPAC22E12.18"/>
<dbReference type="VEuPathDB" id="FungiDB:SPAC22E12.18"/>
<dbReference type="eggNOG" id="ENOG502QZAU">
    <property type="taxonomic scope" value="Eukaryota"/>
</dbReference>
<dbReference type="HOGENOM" id="CLU_067849_0_0_1"/>
<dbReference type="InParanoid" id="Q10368"/>
<dbReference type="OMA" id="HEATKFC"/>
<dbReference type="PhylomeDB" id="Q10368"/>
<dbReference type="PRO" id="PR:Q10368"/>
<dbReference type="Proteomes" id="UP000002485">
    <property type="component" value="Chromosome I"/>
</dbReference>
<dbReference type="GO" id="GO:0005829">
    <property type="term" value="C:cytosol"/>
    <property type="evidence" value="ECO:0007005"/>
    <property type="project" value="PomBase"/>
</dbReference>
<dbReference type="GO" id="GO:0005634">
    <property type="term" value="C:nucleus"/>
    <property type="evidence" value="ECO:0000318"/>
    <property type="project" value="GO_Central"/>
</dbReference>
<dbReference type="Gene3D" id="1.20.1410.10">
    <property type="entry name" value="I/LWEQ domain"/>
    <property type="match status" value="1"/>
</dbReference>
<dbReference type="Gene3D" id="1.20.1420.10">
    <property type="entry name" value="Talin, central domain"/>
    <property type="match status" value="1"/>
</dbReference>
<dbReference type="InterPro" id="IPR026907">
    <property type="entry name" value="GCIP-like"/>
</dbReference>
<dbReference type="InterPro" id="IPR049317">
    <property type="entry name" value="GCIP-like_N"/>
</dbReference>
<dbReference type="PANTHER" id="PTHR15492">
    <property type="entry name" value="CYCLIN D1-BINDING PROTEIN 1"/>
    <property type="match status" value="1"/>
</dbReference>
<dbReference type="PANTHER" id="PTHR15492:SF1">
    <property type="entry name" value="CYCLIN-D1-BINDING PROTEIN 1"/>
    <property type="match status" value="1"/>
</dbReference>
<dbReference type="Pfam" id="PF13324">
    <property type="entry name" value="GCIP_N"/>
    <property type="match status" value="1"/>
</dbReference>
<proteinExistence type="evidence at protein level"/>